<sequence>MNNLLIEIGAEEIPAGYILPALTSFCDRVTAALTGARINHGKTAVFGTPRRLALMVEDVQACQAPQKTTLMGPPQRIGFDNEGKPTLAGVKFAEKAGIVPEEIIITDNGKGPYLSAVIEESCLLTEAILEGVLPELIQAIPFPKSMHWGDLDVTFARPIVSLTALLGKTVLNFKIGNIASASFVFGHSFMAPERFELESADAYLDTLRKAGVVADIGERRTILKESIKAAADKACATIIEDEELVDIVNNLVEYPYPVVGHFDEVFLELPDEVLITAMREHQKYFALADTAGKLMPCFIAVNNTRARDMDVVAKGHGKVIRARLADAQFFYHVDLESTLDDFVEKLKAVTFQASLGSMYEKTGRLVVLVEFLAGLVNADQELQKKLMRAARLSKADLVSQMVIEFTKLQGIIGRVYAQKGGEDPEVAMAIEEHYRPVYSGGDLPRTDTGKILAIADKTDTLCGCFSANLIPTGASDPYALRRQSIGILQIMLEAGFDFSLRALVRRGVAQYQTDPDKKNEISTQILEFLKGRMTNMLVDQGFSREAVNAALSVSFYNVPDAFLRIKALDILRQEPDFEPLSTAFKRVVNILKKAGGDAKTRVNVNLFNCDAEKALHQACGEVTERVDTCIKAGDYGAALKEISTLRPHVDRLFEDVMVMDDDVALRINRMALLSSVAALFRNIADFSQI</sequence>
<feature type="chain" id="PRO_1000204601" description="Glycine--tRNA ligase beta subunit">
    <location>
        <begin position="1"/>
        <end position="689"/>
    </location>
</feature>
<evidence type="ECO:0000255" key="1">
    <source>
        <dbReference type="HAMAP-Rule" id="MF_00255"/>
    </source>
</evidence>
<dbReference type="EC" id="6.1.1.14" evidence="1"/>
<dbReference type="EMBL" id="CP001087">
    <property type="protein sequence ID" value="ACN15902.1"/>
    <property type="molecule type" value="Genomic_DNA"/>
</dbReference>
<dbReference type="RefSeq" id="WP_015904665.1">
    <property type="nucleotide sequence ID" value="NC_012108.1"/>
</dbReference>
<dbReference type="SMR" id="C0QJ89"/>
<dbReference type="STRING" id="177437.HRM2_28130"/>
<dbReference type="KEGG" id="dat:HRM2_28130"/>
<dbReference type="eggNOG" id="COG0751">
    <property type="taxonomic scope" value="Bacteria"/>
</dbReference>
<dbReference type="HOGENOM" id="CLU_007220_2_2_7"/>
<dbReference type="OrthoDB" id="9775440at2"/>
<dbReference type="Proteomes" id="UP000000442">
    <property type="component" value="Chromosome"/>
</dbReference>
<dbReference type="GO" id="GO:0005829">
    <property type="term" value="C:cytosol"/>
    <property type="evidence" value="ECO:0007669"/>
    <property type="project" value="TreeGrafter"/>
</dbReference>
<dbReference type="GO" id="GO:0004814">
    <property type="term" value="F:arginine-tRNA ligase activity"/>
    <property type="evidence" value="ECO:0007669"/>
    <property type="project" value="InterPro"/>
</dbReference>
<dbReference type="GO" id="GO:0005524">
    <property type="term" value="F:ATP binding"/>
    <property type="evidence" value="ECO:0007669"/>
    <property type="project" value="UniProtKB-UniRule"/>
</dbReference>
<dbReference type="GO" id="GO:0004820">
    <property type="term" value="F:glycine-tRNA ligase activity"/>
    <property type="evidence" value="ECO:0007669"/>
    <property type="project" value="UniProtKB-UniRule"/>
</dbReference>
<dbReference type="GO" id="GO:0006420">
    <property type="term" value="P:arginyl-tRNA aminoacylation"/>
    <property type="evidence" value="ECO:0007669"/>
    <property type="project" value="InterPro"/>
</dbReference>
<dbReference type="GO" id="GO:0006426">
    <property type="term" value="P:glycyl-tRNA aminoacylation"/>
    <property type="evidence" value="ECO:0007669"/>
    <property type="project" value="UniProtKB-UniRule"/>
</dbReference>
<dbReference type="HAMAP" id="MF_00255">
    <property type="entry name" value="Gly_tRNA_synth_beta"/>
    <property type="match status" value="1"/>
</dbReference>
<dbReference type="InterPro" id="IPR008909">
    <property type="entry name" value="DALR_anticod-bd"/>
</dbReference>
<dbReference type="InterPro" id="IPR015944">
    <property type="entry name" value="Gly-tRNA-synth_bsu"/>
</dbReference>
<dbReference type="InterPro" id="IPR006194">
    <property type="entry name" value="Gly-tRNA-synth_heterodimer"/>
</dbReference>
<dbReference type="NCBIfam" id="TIGR00211">
    <property type="entry name" value="glyS"/>
    <property type="match status" value="1"/>
</dbReference>
<dbReference type="PANTHER" id="PTHR30075:SF2">
    <property type="entry name" value="GLYCINE--TRNA LIGASE, CHLOROPLASTIC_MITOCHONDRIAL 2"/>
    <property type="match status" value="1"/>
</dbReference>
<dbReference type="PANTHER" id="PTHR30075">
    <property type="entry name" value="GLYCYL-TRNA SYNTHETASE"/>
    <property type="match status" value="1"/>
</dbReference>
<dbReference type="Pfam" id="PF05746">
    <property type="entry name" value="DALR_1"/>
    <property type="match status" value="1"/>
</dbReference>
<dbReference type="Pfam" id="PF02092">
    <property type="entry name" value="tRNA_synt_2f"/>
    <property type="match status" value="1"/>
</dbReference>
<dbReference type="PRINTS" id="PR01045">
    <property type="entry name" value="TRNASYNTHGB"/>
</dbReference>
<dbReference type="SUPFAM" id="SSF109604">
    <property type="entry name" value="HD-domain/PDEase-like"/>
    <property type="match status" value="1"/>
</dbReference>
<dbReference type="PROSITE" id="PS50861">
    <property type="entry name" value="AA_TRNA_LIGASE_II_GLYAB"/>
    <property type="match status" value="1"/>
</dbReference>
<comment type="catalytic activity">
    <reaction evidence="1">
        <text>tRNA(Gly) + glycine + ATP = glycyl-tRNA(Gly) + AMP + diphosphate</text>
        <dbReference type="Rhea" id="RHEA:16013"/>
        <dbReference type="Rhea" id="RHEA-COMP:9664"/>
        <dbReference type="Rhea" id="RHEA-COMP:9683"/>
        <dbReference type="ChEBI" id="CHEBI:30616"/>
        <dbReference type="ChEBI" id="CHEBI:33019"/>
        <dbReference type="ChEBI" id="CHEBI:57305"/>
        <dbReference type="ChEBI" id="CHEBI:78442"/>
        <dbReference type="ChEBI" id="CHEBI:78522"/>
        <dbReference type="ChEBI" id="CHEBI:456215"/>
        <dbReference type="EC" id="6.1.1.14"/>
    </reaction>
</comment>
<comment type="subunit">
    <text evidence="1">Tetramer of two alpha and two beta subunits.</text>
</comment>
<comment type="subcellular location">
    <subcellularLocation>
        <location evidence="1">Cytoplasm</location>
    </subcellularLocation>
</comment>
<comment type="similarity">
    <text evidence="1">Belongs to the class-II aminoacyl-tRNA synthetase family.</text>
</comment>
<accession>C0QJ89</accession>
<proteinExistence type="inferred from homology"/>
<keyword id="KW-0030">Aminoacyl-tRNA synthetase</keyword>
<keyword id="KW-0067">ATP-binding</keyword>
<keyword id="KW-0963">Cytoplasm</keyword>
<keyword id="KW-0436">Ligase</keyword>
<keyword id="KW-0547">Nucleotide-binding</keyword>
<keyword id="KW-0648">Protein biosynthesis</keyword>
<keyword id="KW-1185">Reference proteome</keyword>
<reference key="1">
    <citation type="journal article" date="2009" name="Environ. Microbiol.">
        <title>Genome sequence of Desulfobacterium autotrophicum HRM2, a marine sulfate reducer oxidizing organic carbon completely to carbon dioxide.</title>
        <authorList>
            <person name="Strittmatter A.W."/>
            <person name="Liesegang H."/>
            <person name="Rabus R."/>
            <person name="Decker I."/>
            <person name="Amann J."/>
            <person name="Andres S."/>
            <person name="Henne A."/>
            <person name="Fricke W.F."/>
            <person name="Martinez-Arias R."/>
            <person name="Bartels D."/>
            <person name="Goesmann A."/>
            <person name="Krause L."/>
            <person name="Puehler A."/>
            <person name="Klenk H.P."/>
            <person name="Richter M."/>
            <person name="Schuler M."/>
            <person name="Gloeckner F.O."/>
            <person name="Meyerdierks A."/>
            <person name="Gottschalk G."/>
            <person name="Amann R."/>
        </authorList>
    </citation>
    <scope>NUCLEOTIDE SEQUENCE [LARGE SCALE GENOMIC DNA]</scope>
    <source>
        <strain>ATCC 43914 / DSM 3382 / VKM B-1955 / HRM2</strain>
    </source>
</reference>
<protein>
    <recommendedName>
        <fullName evidence="1">Glycine--tRNA ligase beta subunit</fullName>
        <ecNumber evidence="1">6.1.1.14</ecNumber>
    </recommendedName>
    <alternativeName>
        <fullName evidence="1">Glycyl-tRNA synthetase beta subunit</fullName>
        <shortName evidence="1">GlyRS</shortName>
    </alternativeName>
</protein>
<gene>
    <name evidence="1" type="primary">glyS</name>
    <name type="ordered locus">HRM2_28130</name>
</gene>
<name>SYGB_DESAH</name>
<organism>
    <name type="scientific">Desulforapulum autotrophicum (strain ATCC 43914 / DSM 3382 / VKM B-1955 / HRM2)</name>
    <name type="common">Desulfobacterium autotrophicum</name>
    <dbReference type="NCBI Taxonomy" id="177437"/>
    <lineage>
        <taxon>Bacteria</taxon>
        <taxon>Pseudomonadati</taxon>
        <taxon>Thermodesulfobacteriota</taxon>
        <taxon>Desulfobacteria</taxon>
        <taxon>Desulfobacterales</taxon>
        <taxon>Desulfobacteraceae</taxon>
        <taxon>Desulforapulum</taxon>
    </lineage>
</organism>